<proteinExistence type="inferred from homology"/>
<feature type="chain" id="PRO_0000301739" description="Topoisomerase 1-associated factor 1">
    <location>
        <begin position="1"/>
        <end position="1167"/>
    </location>
</feature>
<feature type="region of interest" description="Disordered" evidence="2">
    <location>
        <begin position="332"/>
        <end position="353"/>
    </location>
</feature>
<feature type="region of interest" description="Disordered" evidence="2">
    <location>
        <begin position="563"/>
        <end position="594"/>
    </location>
</feature>
<feature type="region of interest" description="Disordered" evidence="2">
    <location>
        <begin position="889"/>
        <end position="969"/>
    </location>
</feature>
<feature type="region of interest" description="Disordered" evidence="2">
    <location>
        <begin position="981"/>
        <end position="1093"/>
    </location>
</feature>
<feature type="region of interest" description="Disordered" evidence="2">
    <location>
        <begin position="1105"/>
        <end position="1167"/>
    </location>
</feature>
<feature type="compositionally biased region" description="Basic and acidic residues" evidence="2">
    <location>
        <begin position="572"/>
        <end position="582"/>
    </location>
</feature>
<feature type="compositionally biased region" description="Acidic residues" evidence="2">
    <location>
        <begin position="583"/>
        <end position="593"/>
    </location>
</feature>
<feature type="compositionally biased region" description="Acidic residues" evidence="2">
    <location>
        <begin position="949"/>
        <end position="958"/>
    </location>
</feature>
<feature type="compositionally biased region" description="Basic and acidic residues" evidence="2">
    <location>
        <begin position="959"/>
        <end position="969"/>
    </location>
</feature>
<feature type="compositionally biased region" description="Basic and acidic residues" evidence="2">
    <location>
        <begin position="996"/>
        <end position="1013"/>
    </location>
</feature>
<feature type="compositionally biased region" description="Acidic residues" evidence="2">
    <location>
        <begin position="1062"/>
        <end position="1074"/>
    </location>
</feature>
<feature type="compositionally biased region" description="Polar residues" evidence="2">
    <location>
        <begin position="1078"/>
        <end position="1088"/>
    </location>
</feature>
<feature type="compositionally biased region" description="Basic and acidic residues" evidence="2">
    <location>
        <begin position="1110"/>
        <end position="1127"/>
    </location>
</feature>
<feature type="sequence conflict" description="In Ref. 1; AAD41625." evidence="3" ref="1">
    <original>E</original>
    <variation>V</variation>
    <location>
        <position position="635"/>
    </location>
</feature>
<feature type="sequence conflict" description="In Ref. 1; AAD41625." evidence="3" ref="1">
    <original>L</original>
    <variation>C</variation>
    <location>
        <position position="1016"/>
    </location>
</feature>
<reference key="1">
    <citation type="submission" date="1998-06" db="EMBL/GenBank/DDBJ databases">
        <title>Cloning, sequencing, and functional analysis of mdrA, an Aspergillus nidulans drug resistance gene.</title>
        <authorList>
            <person name="Cheong C."/>
            <person name="Kang H.-S."/>
        </authorList>
    </citation>
    <scope>NUCLEOTIDE SEQUENCE [GENOMIC DNA]</scope>
</reference>
<reference key="2">
    <citation type="journal article" date="2005" name="Nature">
        <title>Sequencing of Aspergillus nidulans and comparative analysis with A. fumigatus and A. oryzae.</title>
        <authorList>
            <person name="Galagan J.E."/>
            <person name="Calvo S.E."/>
            <person name="Cuomo C."/>
            <person name="Ma L.-J."/>
            <person name="Wortman J.R."/>
            <person name="Batzoglou S."/>
            <person name="Lee S.-I."/>
            <person name="Bastuerkmen M."/>
            <person name="Spevak C.C."/>
            <person name="Clutterbuck J."/>
            <person name="Kapitonov V."/>
            <person name="Jurka J."/>
            <person name="Scazzocchio C."/>
            <person name="Farman M.L."/>
            <person name="Butler J."/>
            <person name="Purcell S."/>
            <person name="Harris S."/>
            <person name="Braus G.H."/>
            <person name="Draht O."/>
            <person name="Busch S."/>
            <person name="D'Enfert C."/>
            <person name="Bouchier C."/>
            <person name="Goldman G.H."/>
            <person name="Bell-Pedersen D."/>
            <person name="Griffiths-Jones S."/>
            <person name="Doonan J.H."/>
            <person name="Yu J."/>
            <person name="Vienken K."/>
            <person name="Pain A."/>
            <person name="Freitag M."/>
            <person name="Selker E.U."/>
            <person name="Archer D.B."/>
            <person name="Penalva M.A."/>
            <person name="Oakley B.R."/>
            <person name="Momany M."/>
            <person name="Tanaka T."/>
            <person name="Kumagai T."/>
            <person name="Asai K."/>
            <person name="Machida M."/>
            <person name="Nierman W.C."/>
            <person name="Denning D.W."/>
            <person name="Caddick M.X."/>
            <person name="Hynes M."/>
            <person name="Paoletti M."/>
            <person name="Fischer R."/>
            <person name="Miller B.L."/>
            <person name="Dyer P.S."/>
            <person name="Sachs M.S."/>
            <person name="Osmani S.A."/>
            <person name="Birren B.W."/>
        </authorList>
    </citation>
    <scope>NUCLEOTIDE SEQUENCE [LARGE SCALE GENOMIC DNA]</scope>
    <source>
        <strain>FGSC A4 / ATCC 38163 / CBS 112.46 / NRRL 194 / M139</strain>
    </source>
</reference>
<reference key="3">
    <citation type="journal article" date="2009" name="Fungal Genet. Biol.">
        <title>The 2008 update of the Aspergillus nidulans genome annotation: a community effort.</title>
        <authorList>
            <person name="Wortman J.R."/>
            <person name="Gilsenan J.M."/>
            <person name="Joardar V."/>
            <person name="Deegan J."/>
            <person name="Clutterbuck J."/>
            <person name="Andersen M.R."/>
            <person name="Archer D."/>
            <person name="Bencina M."/>
            <person name="Braus G."/>
            <person name="Coutinho P."/>
            <person name="von Dohren H."/>
            <person name="Doonan J."/>
            <person name="Driessen A.J."/>
            <person name="Durek P."/>
            <person name="Espeso E."/>
            <person name="Fekete E."/>
            <person name="Flipphi M."/>
            <person name="Estrada C.G."/>
            <person name="Geysens S."/>
            <person name="Goldman G."/>
            <person name="de Groot P.W."/>
            <person name="Hansen K."/>
            <person name="Harris S.D."/>
            <person name="Heinekamp T."/>
            <person name="Helmstaedt K."/>
            <person name="Henrissat B."/>
            <person name="Hofmann G."/>
            <person name="Homan T."/>
            <person name="Horio T."/>
            <person name="Horiuchi H."/>
            <person name="James S."/>
            <person name="Jones M."/>
            <person name="Karaffa L."/>
            <person name="Karanyi Z."/>
            <person name="Kato M."/>
            <person name="Keller N."/>
            <person name="Kelly D.E."/>
            <person name="Kiel J.A."/>
            <person name="Kim J.M."/>
            <person name="van der Klei I.J."/>
            <person name="Klis F.M."/>
            <person name="Kovalchuk A."/>
            <person name="Krasevec N."/>
            <person name="Kubicek C.P."/>
            <person name="Liu B."/>
            <person name="Maccabe A."/>
            <person name="Meyer V."/>
            <person name="Mirabito P."/>
            <person name="Miskei M."/>
            <person name="Mos M."/>
            <person name="Mullins J."/>
            <person name="Nelson D.R."/>
            <person name="Nielsen J."/>
            <person name="Oakley B.R."/>
            <person name="Osmani S.A."/>
            <person name="Pakula T."/>
            <person name="Paszewski A."/>
            <person name="Paulsen I."/>
            <person name="Pilsyk S."/>
            <person name="Pocsi I."/>
            <person name="Punt P.J."/>
            <person name="Ram A.F."/>
            <person name="Ren Q."/>
            <person name="Robellet X."/>
            <person name="Robson G."/>
            <person name="Seiboth B."/>
            <person name="van Solingen P."/>
            <person name="Specht T."/>
            <person name="Sun J."/>
            <person name="Taheri-Talesh N."/>
            <person name="Takeshita N."/>
            <person name="Ussery D."/>
            <person name="vanKuyk P.A."/>
            <person name="Visser H."/>
            <person name="van de Vondervoort P.J."/>
            <person name="de Vries R.P."/>
            <person name="Walton J."/>
            <person name="Xiang X."/>
            <person name="Xiong Y."/>
            <person name="Zeng A.P."/>
            <person name="Brandt B.W."/>
            <person name="Cornell M.J."/>
            <person name="van den Hondel C.A."/>
            <person name="Visser J."/>
            <person name="Oliver S.G."/>
            <person name="Turner G."/>
        </authorList>
    </citation>
    <scope>GENOME REANNOTATION</scope>
    <source>
        <strain>FGSC A4 / ATCC 38163 / CBS 112.46 / NRRL 194 / M139</strain>
    </source>
</reference>
<organism>
    <name type="scientific">Emericella nidulans (strain FGSC A4 / ATCC 38163 / CBS 112.46 / NRRL 194 / M139)</name>
    <name type="common">Aspergillus nidulans</name>
    <dbReference type="NCBI Taxonomy" id="227321"/>
    <lineage>
        <taxon>Eukaryota</taxon>
        <taxon>Fungi</taxon>
        <taxon>Dikarya</taxon>
        <taxon>Ascomycota</taxon>
        <taxon>Pezizomycotina</taxon>
        <taxon>Eurotiomycetes</taxon>
        <taxon>Eurotiomycetidae</taxon>
        <taxon>Eurotiales</taxon>
        <taxon>Aspergillaceae</taxon>
        <taxon>Aspergillus</taxon>
        <taxon>Aspergillus subgen. Nidulantes</taxon>
    </lineage>
</organism>
<protein>
    <recommendedName>
        <fullName>Topoisomerase 1-associated factor 1</fullName>
    </recommendedName>
</protein>
<keyword id="KW-0131">Cell cycle</keyword>
<keyword id="KW-0227">DNA damage</keyword>
<keyword id="KW-0234">DNA repair</keyword>
<keyword id="KW-0236">DNA replication inhibitor</keyword>
<keyword id="KW-0469">Meiosis</keyword>
<keyword id="KW-0539">Nucleus</keyword>
<keyword id="KW-1185">Reference proteome</keyword>
<sequence>MEEAVPAQTVEVIDPEVRAHVYSLLGGFNGEDADKYVLGDDALSCLRDIKRWLKLYDEKFNRMDVARCLGEANLVNGDLIQILSLWWREGQQSKYMTRIALACVELLVPLTWPLEIHGEMTVNHHRHIPYLQQAQVGYKRGILNMASCGILRAVIRIGLPSMAIPPSERTARDEGILKIMLYLLRNIAIITANARLAAEGEEEETSRSATINAFHDQDVFALLLTLCSNVSDDFNMLDIPLLEILFHMVRGIDVEKLFMNDAQRSAKRTDELNDLLRQESSMRREYAKNAPTRHGRFGTMIWVKRDDAKMSTVSGQDVLRDEQTTLYKMDQSKRWNKPRRGRKAQDMSVNNDFNTPVHISPSATTNLRMFVEEFLDSGFNPLFVHVRKAIERESIRVLDINKRHFLYTVSWFLGAERARRARQREKYAQSGKKPDNELEPDSFGLVAGVLNQETFVFLNRSMQNSLDNKEWDDLNAAMRCFTQILLTVQEMSQSPLEEDQEIAENIQNRIFYEETTHDRILAILRGYTDQGFGYLDACTELSHVFLRMLERYSKTNVDMQVRSRRRARKRKREEQLVNKGSDEEQESEDEDYAEAEKMSKERKFDFTRFAAKFSNQKCVDTFVAFTKFYKELNNEQLKRAHRYFYRIAFKQEMTVLLFRVDILNLFYRIIKGPGGMDSSKPIYKEWEELVRQLIRRLIKKLEQRPALITELLFSKINSTAFYLEYGFEKQTVTTSKRAPAELEVDPKAASTPEEKLSIVVAALVKDEQSALVKWISEVLGSAADEREAWELNSHDVDLAGPRDTQNPIITVKSQDNSFKRAMFQNAKLRLLMTLLKFDRLGQENVEGISWIIPSELKSDELRESKAVIDKALLIGNTDERDPNDLLRKKYSHEPRDGFSGQNLDVNFGSDSEGEDVIPDGPLFPANPRSKAHALNELKQKRKKRKDKGEEEPVDEETLEERRQARLENTRWRLAKIKSDLYVHASDEESDAEADQEFFRLEEERRNEQSERIKKALLLGRTEDAGNKARQRKRGKRSNEPNIAGEEETSGKRRRHSGGTNVELEEDDILMDDMEMPSRASSGEYSSNDADAIDKSMAAAEDELYFDDDLAFGRDRDKDETSVDRDGADASSPRKHNDGSESAEEDIPLAPPNRRRLRAGFVVESDSE</sequence>
<name>TOF1_EMENI</name>
<evidence type="ECO:0000250" key="1"/>
<evidence type="ECO:0000256" key="2">
    <source>
        <dbReference type="SAM" id="MobiDB-lite"/>
    </source>
</evidence>
<evidence type="ECO:0000305" key="3"/>
<accession>Q5AXH3</accession>
<accession>C8VC91</accession>
<accession>Q9Y8F5</accession>
<gene>
    <name type="primary">tof1</name>
    <name type="synonym">mdrA</name>
    <name type="ORF">AN7007</name>
</gene>
<comment type="function">
    <text evidence="1">Involved in chromosome segregation during meiosis and DNA damage repair.</text>
</comment>
<comment type="subcellular location">
    <subcellularLocation>
        <location evidence="1">Nucleus</location>
    </subcellularLocation>
</comment>
<comment type="similarity">
    <text evidence="3">Belongs to the timeless family.</text>
</comment>
<comment type="sequence caution" evidence="3">
    <conflict type="erroneous gene model prediction">
        <sequence resource="EMBL-CDS" id="AAD41625"/>
    </conflict>
</comment>
<comment type="sequence caution" evidence="3">
    <conflict type="erroneous gene model prediction">
        <sequence resource="EMBL-CDS" id="CBF79271"/>
    </conflict>
</comment>
<comment type="sequence caution" evidence="3">
    <conflict type="erroneous gene model prediction">
        <sequence resource="EMBL-CDS" id="EAA61653"/>
    </conflict>
</comment>
<dbReference type="EMBL" id="AF072683">
    <property type="protein sequence ID" value="AAD41625.1"/>
    <property type="status" value="ALT_SEQ"/>
    <property type="molecule type" value="Genomic_DNA"/>
</dbReference>
<dbReference type="EMBL" id="AACD01000117">
    <property type="protein sequence ID" value="EAA61653.1"/>
    <property type="status" value="ALT_SEQ"/>
    <property type="molecule type" value="Genomic_DNA"/>
</dbReference>
<dbReference type="EMBL" id="BN001304">
    <property type="protein sequence ID" value="CBF79271.1"/>
    <property type="status" value="ALT_SEQ"/>
    <property type="molecule type" value="Genomic_DNA"/>
</dbReference>
<dbReference type="RefSeq" id="XP_664611.1">
    <property type="nucleotide sequence ID" value="XM_659519.1"/>
</dbReference>
<dbReference type="SMR" id="Q5AXH3"/>
<dbReference type="FunCoup" id="Q5AXH3">
    <property type="interactions" value="51"/>
</dbReference>
<dbReference type="STRING" id="227321.Q5AXH3"/>
<dbReference type="KEGG" id="ani:ANIA_07007"/>
<dbReference type="eggNOG" id="KOG1974">
    <property type="taxonomic scope" value="Eukaryota"/>
</dbReference>
<dbReference type="HOGENOM" id="CLU_004390_0_0_1"/>
<dbReference type="InParanoid" id="Q5AXH3"/>
<dbReference type="OrthoDB" id="310853at2759"/>
<dbReference type="Proteomes" id="UP000000560">
    <property type="component" value="Chromosome IV"/>
</dbReference>
<dbReference type="GO" id="GO:0031298">
    <property type="term" value="C:replication fork protection complex"/>
    <property type="evidence" value="ECO:0000318"/>
    <property type="project" value="GO_Central"/>
</dbReference>
<dbReference type="GO" id="GO:0003677">
    <property type="term" value="F:DNA binding"/>
    <property type="evidence" value="ECO:0000318"/>
    <property type="project" value="GO_Central"/>
</dbReference>
<dbReference type="GO" id="GO:0006281">
    <property type="term" value="P:DNA repair"/>
    <property type="evidence" value="ECO:0000318"/>
    <property type="project" value="GO_Central"/>
</dbReference>
<dbReference type="GO" id="GO:0000076">
    <property type="term" value="P:DNA replication checkpoint signaling"/>
    <property type="evidence" value="ECO:0000318"/>
    <property type="project" value="GO_Central"/>
</dbReference>
<dbReference type="GO" id="GO:0051321">
    <property type="term" value="P:meiotic cell cycle"/>
    <property type="evidence" value="ECO:0007669"/>
    <property type="project" value="UniProtKB-KW"/>
</dbReference>
<dbReference type="GO" id="GO:0043111">
    <property type="term" value="P:replication fork arrest"/>
    <property type="evidence" value="ECO:0000318"/>
    <property type="project" value="GO_Central"/>
</dbReference>
<dbReference type="InterPro" id="IPR044998">
    <property type="entry name" value="Timeless"/>
</dbReference>
<dbReference type="InterPro" id="IPR006906">
    <property type="entry name" value="Timeless_N"/>
</dbReference>
<dbReference type="PANTHER" id="PTHR22940:SF4">
    <property type="entry name" value="PROTEIN TIMELESS HOMOLOG"/>
    <property type="match status" value="1"/>
</dbReference>
<dbReference type="PANTHER" id="PTHR22940">
    <property type="entry name" value="TIMEOUT/TIMELESS-2"/>
    <property type="match status" value="1"/>
</dbReference>
<dbReference type="Pfam" id="PF04821">
    <property type="entry name" value="TIMELESS"/>
    <property type="match status" value="1"/>
</dbReference>